<organism>
    <name type="scientific">Salmonella paratyphi B (strain ATCC BAA-1250 / SPB7)</name>
    <dbReference type="NCBI Taxonomy" id="1016998"/>
    <lineage>
        <taxon>Bacteria</taxon>
        <taxon>Pseudomonadati</taxon>
        <taxon>Pseudomonadota</taxon>
        <taxon>Gammaproteobacteria</taxon>
        <taxon>Enterobacterales</taxon>
        <taxon>Enterobacteriaceae</taxon>
        <taxon>Salmonella</taxon>
    </lineage>
</organism>
<feature type="chain" id="PRO_1000075545" description="Sugar fermentation stimulation protein A">
    <location>
        <begin position="1"/>
        <end position="234"/>
    </location>
</feature>
<feature type="DNA-binding region" description="H-T-H motif" evidence="1">
    <location>
        <begin position="201"/>
        <end position="220"/>
    </location>
</feature>
<comment type="function">
    <text evidence="1">Binds to DNA non-specifically. Could be a regulatory factor involved in maltose metabolism.</text>
</comment>
<comment type="similarity">
    <text evidence="1">Belongs to the SfsA family.</text>
</comment>
<evidence type="ECO:0000255" key="1">
    <source>
        <dbReference type="HAMAP-Rule" id="MF_00095"/>
    </source>
</evidence>
<dbReference type="EMBL" id="CP000886">
    <property type="protein sequence ID" value="ABX65680.1"/>
    <property type="molecule type" value="Genomic_DNA"/>
</dbReference>
<dbReference type="RefSeq" id="WP_000899412.1">
    <property type="nucleotide sequence ID" value="NC_010102.1"/>
</dbReference>
<dbReference type="SMR" id="A9MZU5"/>
<dbReference type="KEGG" id="spq:SPAB_00238"/>
<dbReference type="PATRIC" id="fig|1016998.12.peg.230"/>
<dbReference type="HOGENOM" id="CLU_052299_2_0_6"/>
<dbReference type="BioCyc" id="SENT1016998:SPAB_RS00975-MONOMER"/>
<dbReference type="Proteomes" id="UP000008556">
    <property type="component" value="Chromosome"/>
</dbReference>
<dbReference type="GO" id="GO:0003677">
    <property type="term" value="F:DNA binding"/>
    <property type="evidence" value="ECO:0007669"/>
    <property type="project" value="UniProtKB-KW"/>
</dbReference>
<dbReference type="CDD" id="cd22359">
    <property type="entry name" value="SfsA-like_bacterial"/>
    <property type="match status" value="1"/>
</dbReference>
<dbReference type="FunFam" id="2.40.50.580:FF:000001">
    <property type="entry name" value="Sugar fermentation stimulation protein A"/>
    <property type="match status" value="1"/>
</dbReference>
<dbReference type="FunFam" id="3.40.1350.60:FF:000001">
    <property type="entry name" value="Sugar fermentation stimulation protein A"/>
    <property type="match status" value="1"/>
</dbReference>
<dbReference type="Gene3D" id="2.40.50.580">
    <property type="match status" value="1"/>
</dbReference>
<dbReference type="Gene3D" id="3.40.1350.60">
    <property type="match status" value="1"/>
</dbReference>
<dbReference type="HAMAP" id="MF_00095">
    <property type="entry name" value="SfsA"/>
    <property type="match status" value="1"/>
</dbReference>
<dbReference type="InterPro" id="IPR005224">
    <property type="entry name" value="SfsA"/>
</dbReference>
<dbReference type="InterPro" id="IPR040452">
    <property type="entry name" value="SfsA_C"/>
</dbReference>
<dbReference type="InterPro" id="IPR041465">
    <property type="entry name" value="SfsA_N"/>
</dbReference>
<dbReference type="NCBIfam" id="TIGR00230">
    <property type="entry name" value="sfsA"/>
    <property type="match status" value="1"/>
</dbReference>
<dbReference type="PANTHER" id="PTHR30545">
    <property type="entry name" value="SUGAR FERMENTATION STIMULATION PROTEIN A"/>
    <property type="match status" value="1"/>
</dbReference>
<dbReference type="PANTHER" id="PTHR30545:SF2">
    <property type="entry name" value="SUGAR FERMENTATION STIMULATION PROTEIN A"/>
    <property type="match status" value="1"/>
</dbReference>
<dbReference type="Pfam" id="PF03749">
    <property type="entry name" value="SfsA"/>
    <property type="match status" value="1"/>
</dbReference>
<dbReference type="Pfam" id="PF17746">
    <property type="entry name" value="SfsA_N"/>
    <property type="match status" value="1"/>
</dbReference>
<sequence length="234" mass="26160">MLFSPPLQRATLIQRYKRFLADVITPDGTTLTLHCPNTGAMTGCATPGDTVWYSTSENTKRKYPHTWELTETQSGAFICVNTLRANQLTKEAIQENRLPALAGYNILKSEVKYGAERSRIDFMLQADFRPDCYIEVKSVTLAEKENGYFPDAITERGQKHLRELMGVAAAGHRAVVVFAVLHSAITRFSPARHIDIKYAQLLSEAQNKGVEVLAYKAELSAQKMELNEPVPITL</sequence>
<name>SFSA_SALPB</name>
<reference key="1">
    <citation type="submission" date="2007-11" db="EMBL/GenBank/DDBJ databases">
        <authorList>
            <consortium name="The Salmonella enterica serovar Paratyphi B Genome Sequencing Project"/>
            <person name="McClelland M."/>
            <person name="Sanderson E.K."/>
            <person name="Porwollik S."/>
            <person name="Spieth J."/>
            <person name="Clifton W.S."/>
            <person name="Fulton R."/>
            <person name="Cordes M."/>
            <person name="Wollam A."/>
            <person name="Shah N."/>
            <person name="Pepin K."/>
            <person name="Bhonagiri V."/>
            <person name="Nash W."/>
            <person name="Johnson M."/>
            <person name="Thiruvilangam P."/>
            <person name="Wilson R."/>
        </authorList>
    </citation>
    <scope>NUCLEOTIDE SEQUENCE [LARGE SCALE GENOMIC DNA]</scope>
    <source>
        <strain>ATCC BAA-1250 / SPB7</strain>
    </source>
</reference>
<protein>
    <recommendedName>
        <fullName evidence="1">Sugar fermentation stimulation protein A</fullName>
    </recommendedName>
</protein>
<gene>
    <name evidence="1" type="primary">sfsA</name>
    <name type="ordered locus">SPAB_00238</name>
</gene>
<accession>A9MZU5</accession>
<keyword id="KW-0238">DNA-binding</keyword>
<proteinExistence type="inferred from homology"/>